<feature type="chain" id="PRO_1000127520" description="D-aminoacyl-tRNA deacylase">
    <location>
        <begin position="1"/>
        <end position="162"/>
    </location>
</feature>
<feature type="short sequence motif" description="Gly-cisPro motif, important for rejection of L-amino acids" evidence="1">
    <location>
        <begin position="143"/>
        <end position="144"/>
    </location>
</feature>
<comment type="function">
    <text evidence="1">An aminoacyl-tRNA editing enzyme that deacylates mischarged D-aminoacyl-tRNAs. Also deacylates mischarged glycyl-tRNA(Ala), protecting cells against glycine mischarging by AlaRS. Acts via tRNA-based rather than protein-based catalysis; rejects L-amino acids rather than detecting D-amino acids in the active site. By recycling D-aminoacyl-tRNA to D-amino acids and free tRNA molecules, this enzyme counteracts the toxicity associated with the formation of D-aminoacyl-tRNA entities in vivo and helps enforce protein L-homochirality.</text>
</comment>
<comment type="catalytic activity">
    <reaction evidence="1">
        <text>glycyl-tRNA(Ala) + H2O = tRNA(Ala) + glycine + H(+)</text>
        <dbReference type="Rhea" id="RHEA:53744"/>
        <dbReference type="Rhea" id="RHEA-COMP:9657"/>
        <dbReference type="Rhea" id="RHEA-COMP:13640"/>
        <dbReference type="ChEBI" id="CHEBI:15377"/>
        <dbReference type="ChEBI" id="CHEBI:15378"/>
        <dbReference type="ChEBI" id="CHEBI:57305"/>
        <dbReference type="ChEBI" id="CHEBI:78442"/>
        <dbReference type="ChEBI" id="CHEBI:78522"/>
        <dbReference type="EC" id="3.1.1.96"/>
    </reaction>
</comment>
<comment type="catalytic activity">
    <reaction evidence="1">
        <text>a D-aminoacyl-tRNA + H2O = a tRNA + a D-alpha-amino acid + H(+)</text>
        <dbReference type="Rhea" id="RHEA:13953"/>
        <dbReference type="Rhea" id="RHEA-COMP:10123"/>
        <dbReference type="Rhea" id="RHEA-COMP:10124"/>
        <dbReference type="ChEBI" id="CHEBI:15377"/>
        <dbReference type="ChEBI" id="CHEBI:15378"/>
        <dbReference type="ChEBI" id="CHEBI:59871"/>
        <dbReference type="ChEBI" id="CHEBI:78442"/>
        <dbReference type="ChEBI" id="CHEBI:79333"/>
        <dbReference type="EC" id="3.1.1.96"/>
    </reaction>
</comment>
<comment type="subunit">
    <text evidence="1">Homodimer.</text>
</comment>
<comment type="subcellular location">
    <subcellularLocation>
        <location evidence="1">Cytoplasm</location>
    </subcellularLocation>
</comment>
<comment type="domain">
    <text evidence="1">A Gly-cisPro motif from one monomer fits into the active site of the other monomer to allow specific chiral rejection of L-amino acids.</text>
</comment>
<comment type="similarity">
    <text evidence="1">Belongs to the DTD family.</text>
</comment>
<gene>
    <name evidence="1" type="primary">dtd</name>
    <name type="ordered locus">Dvul_1627</name>
</gene>
<accession>A1VDX8</accession>
<sequence>MRLVVQRVLEAGVRVDDTPVATIGTGLLVLAGFGKDDDETLPDSRRWNAMCDKLIDLRIFPDAEGRMNRSLREHGGEVLLVSQFTLYADLRRGRRPSFQTAAPPDTARNLYERLVHDIDARLPGRVSSGIFGALMHVSLINWGPVTLCLDDAELFPEASVAG</sequence>
<evidence type="ECO:0000255" key="1">
    <source>
        <dbReference type="HAMAP-Rule" id="MF_00518"/>
    </source>
</evidence>
<keyword id="KW-0963">Cytoplasm</keyword>
<keyword id="KW-0378">Hydrolase</keyword>
<keyword id="KW-0694">RNA-binding</keyword>
<keyword id="KW-0820">tRNA-binding</keyword>
<organism>
    <name type="scientific">Nitratidesulfovibrio vulgaris (strain DP4)</name>
    <name type="common">Desulfovibrio vulgaris</name>
    <dbReference type="NCBI Taxonomy" id="391774"/>
    <lineage>
        <taxon>Bacteria</taxon>
        <taxon>Pseudomonadati</taxon>
        <taxon>Thermodesulfobacteriota</taxon>
        <taxon>Desulfovibrionia</taxon>
        <taxon>Desulfovibrionales</taxon>
        <taxon>Desulfovibrionaceae</taxon>
        <taxon>Nitratidesulfovibrio</taxon>
    </lineage>
</organism>
<dbReference type="EC" id="3.1.1.96" evidence="1"/>
<dbReference type="EMBL" id="CP000527">
    <property type="protein sequence ID" value="ABM28644.1"/>
    <property type="molecule type" value="Genomic_DNA"/>
</dbReference>
<dbReference type="RefSeq" id="WP_010938745.1">
    <property type="nucleotide sequence ID" value="NC_008751.1"/>
</dbReference>
<dbReference type="SMR" id="A1VDX8"/>
<dbReference type="KEGG" id="dvl:Dvul_1627"/>
<dbReference type="HOGENOM" id="CLU_076901_1_0_7"/>
<dbReference type="Proteomes" id="UP000009173">
    <property type="component" value="Chromosome"/>
</dbReference>
<dbReference type="GO" id="GO:0005737">
    <property type="term" value="C:cytoplasm"/>
    <property type="evidence" value="ECO:0007669"/>
    <property type="project" value="UniProtKB-SubCell"/>
</dbReference>
<dbReference type="GO" id="GO:0051500">
    <property type="term" value="F:D-tyrosyl-tRNA(Tyr) deacylase activity"/>
    <property type="evidence" value="ECO:0007669"/>
    <property type="project" value="TreeGrafter"/>
</dbReference>
<dbReference type="GO" id="GO:0106026">
    <property type="term" value="F:Gly-tRNA(Ala) deacylase activity"/>
    <property type="evidence" value="ECO:0007669"/>
    <property type="project" value="UniProtKB-UniRule"/>
</dbReference>
<dbReference type="GO" id="GO:0043908">
    <property type="term" value="F:Ser(Gly)-tRNA(Ala) hydrolase activity"/>
    <property type="evidence" value="ECO:0007669"/>
    <property type="project" value="UniProtKB-UniRule"/>
</dbReference>
<dbReference type="GO" id="GO:0000049">
    <property type="term" value="F:tRNA binding"/>
    <property type="evidence" value="ECO:0007669"/>
    <property type="project" value="UniProtKB-UniRule"/>
</dbReference>
<dbReference type="GO" id="GO:0019478">
    <property type="term" value="P:D-amino acid catabolic process"/>
    <property type="evidence" value="ECO:0007669"/>
    <property type="project" value="UniProtKB-UniRule"/>
</dbReference>
<dbReference type="FunFam" id="3.50.80.10:FF:000001">
    <property type="entry name" value="D-aminoacyl-tRNA deacylase"/>
    <property type="match status" value="1"/>
</dbReference>
<dbReference type="Gene3D" id="3.50.80.10">
    <property type="entry name" value="D-tyrosyl-tRNA(Tyr) deacylase"/>
    <property type="match status" value="1"/>
</dbReference>
<dbReference type="HAMAP" id="MF_00518">
    <property type="entry name" value="Deacylase_Dtd"/>
    <property type="match status" value="1"/>
</dbReference>
<dbReference type="InterPro" id="IPR003732">
    <property type="entry name" value="Daa-tRNA_deacyls_DTD"/>
</dbReference>
<dbReference type="InterPro" id="IPR023509">
    <property type="entry name" value="DTD-like_sf"/>
</dbReference>
<dbReference type="NCBIfam" id="TIGR00256">
    <property type="entry name" value="D-aminoacyl-tRNA deacylase"/>
    <property type="match status" value="1"/>
</dbReference>
<dbReference type="PANTHER" id="PTHR10472:SF5">
    <property type="entry name" value="D-AMINOACYL-TRNA DEACYLASE 1"/>
    <property type="match status" value="1"/>
</dbReference>
<dbReference type="PANTHER" id="PTHR10472">
    <property type="entry name" value="D-TYROSYL-TRNA TYR DEACYLASE"/>
    <property type="match status" value="1"/>
</dbReference>
<dbReference type="Pfam" id="PF02580">
    <property type="entry name" value="Tyr_Deacylase"/>
    <property type="match status" value="1"/>
</dbReference>
<dbReference type="SUPFAM" id="SSF69500">
    <property type="entry name" value="DTD-like"/>
    <property type="match status" value="1"/>
</dbReference>
<proteinExistence type="inferred from homology"/>
<protein>
    <recommendedName>
        <fullName evidence="1">D-aminoacyl-tRNA deacylase</fullName>
        <shortName evidence="1">DTD</shortName>
        <ecNumber evidence="1">3.1.1.96</ecNumber>
    </recommendedName>
    <alternativeName>
        <fullName evidence="1">Gly-tRNA(Ala) deacylase</fullName>
    </alternativeName>
</protein>
<name>DTD_NITV4</name>
<reference key="1">
    <citation type="journal article" date="2009" name="Environ. Microbiol.">
        <title>Contribution of mobile genetic elements to Desulfovibrio vulgaris genome plasticity.</title>
        <authorList>
            <person name="Walker C.B."/>
            <person name="Stolyar S."/>
            <person name="Chivian D."/>
            <person name="Pinel N."/>
            <person name="Gabster J.A."/>
            <person name="Dehal P.S."/>
            <person name="He Z."/>
            <person name="Yang Z.K."/>
            <person name="Yen H.C."/>
            <person name="Zhou J."/>
            <person name="Wall J.D."/>
            <person name="Hazen T.C."/>
            <person name="Arkin A.P."/>
            <person name="Stahl D.A."/>
        </authorList>
    </citation>
    <scope>NUCLEOTIDE SEQUENCE [LARGE SCALE GENOMIC DNA]</scope>
    <source>
        <strain>DP4</strain>
    </source>
</reference>